<evidence type="ECO:0000255" key="1">
    <source>
        <dbReference type="HAMAP-Rule" id="MF_01973"/>
    </source>
</evidence>
<evidence type="ECO:0000255" key="2">
    <source>
        <dbReference type="PROSITE-ProRule" id="PRU01122"/>
    </source>
</evidence>
<evidence type="ECO:0000255" key="3">
    <source>
        <dbReference type="PROSITE-ProRule" id="PRU01123"/>
    </source>
</evidence>
<evidence type="ECO:0000256" key="4">
    <source>
        <dbReference type="SAM" id="MobiDB-lite"/>
    </source>
</evidence>
<proteinExistence type="inferred from homology"/>
<comment type="function">
    <text evidence="1">ATP-dependent serine protease that mediates the selective degradation of mutant and abnormal proteins as well as certain short-lived regulatory proteins. Required for cellular homeostasis and for survival from DNA damage and developmental changes induced by stress. Degrades polypeptides processively to yield small peptide fragments that are 5 to 10 amino acids long. Binds to DNA in a double-stranded, site-specific manner.</text>
</comment>
<comment type="catalytic activity">
    <reaction evidence="1">
        <text>Hydrolysis of proteins in presence of ATP.</text>
        <dbReference type="EC" id="3.4.21.53"/>
    </reaction>
</comment>
<comment type="subunit">
    <text evidence="1">Homohexamer. Organized in a ring with a central cavity.</text>
</comment>
<comment type="subcellular location">
    <subcellularLocation>
        <location evidence="1">Cytoplasm</location>
    </subcellularLocation>
</comment>
<comment type="induction">
    <text evidence="1">By heat shock.</text>
</comment>
<comment type="similarity">
    <text evidence="1">Belongs to the peptidase S16 family.</text>
</comment>
<protein>
    <recommendedName>
        <fullName evidence="1">Lon protease</fullName>
        <ecNumber evidence="1">3.4.21.53</ecNumber>
    </recommendedName>
    <alternativeName>
        <fullName evidence="1">ATP-dependent protease La</fullName>
    </alternativeName>
</protein>
<gene>
    <name evidence="1" type="primary">lon</name>
    <name type="ordered locus">BruAb1_1112</name>
</gene>
<dbReference type="EC" id="3.4.21.53" evidence="1"/>
<dbReference type="EMBL" id="AE017223">
    <property type="protein sequence ID" value="AAX74453.1"/>
    <property type="molecule type" value="Genomic_DNA"/>
</dbReference>
<dbReference type="RefSeq" id="WP_002966840.1">
    <property type="nucleotide sequence ID" value="NC_006932.1"/>
</dbReference>
<dbReference type="SMR" id="P0C113"/>
<dbReference type="MEROPS" id="S16.001"/>
<dbReference type="EnsemblBacteria" id="AAX74453">
    <property type="protein sequence ID" value="AAX74453"/>
    <property type="gene ID" value="BruAb1_1112"/>
</dbReference>
<dbReference type="GeneID" id="93016554"/>
<dbReference type="KEGG" id="bmb:BruAb1_1112"/>
<dbReference type="HOGENOM" id="CLU_004109_4_3_5"/>
<dbReference type="PRO" id="PR:P0C113"/>
<dbReference type="Proteomes" id="UP000000540">
    <property type="component" value="Chromosome I"/>
</dbReference>
<dbReference type="GO" id="GO:0005737">
    <property type="term" value="C:cytoplasm"/>
    <property type="evidence" value="ECO:0007669"/>
    <property type="project" value="UniProtKB-SubCell"/>
</dbReference>
<dbReference type="GO" id="GO:0005524">
    <property type="term" value="F:ATP binding"/>
    <property type="evidence" value="ECO:0007669"/>
    <property type="project" value="UniProtKB-UniRule"/>
</dbReference>
<dbReference type="GO" id="GO:0016887">
    <property type="term" value="F:ATP hydrolysis activity"/>
    <property type="evidence" value="ECO:0007669"/>
    <property type="project" value="UniProtKB-UniRule"/>
</dbReference>
<dbReference type="GO" id="GO:0004176">
    <property type="term" value="F:ATP-dependent peptidase activity"/>
    <property type="evidence" value="ECO:0007669"/>
    <property type="project" value="UniProtKB-UniRule"/>
</dbReference>
<dbReference type="GO" id="GO:0043565">
    <property type="term" value="F:sequence-specific DNA binding"/>
    <property type="evidence" value="ECO:0007669"/>
    <property type="project" value="UniProtKB-UniRule"/>
</dbReference>
<dbReference type="GO" id="GO:0004252">
    <property type="term" value="F:serine-type endopeptidase activity"/>
    <property type="evidence" value="ECO:0007669"/>
    <property type="project" value="UniProtKB-UniRule"/>
</dbReference>
<dbReference type="GO" id="GO:0034605">
    <property type="term" value="P:cellular response to heat"/>
    <property type="evidence" value="ECO:0007669"/>
    <property type="project" value="UniProtKB-UniRule"/>
</dbReference>
<dbReference type="GO" id="GO:0006515">
    <property type="term" value="P:protein quality control for misfolded or incompletely synthesized proteins"/>
    <property type="evidence" value="ECO:0007669"/>
    <property type="project" value="UniProtKB-UniRule"/>
</dbReference>
<dbReference type="CDD" id="cd19500">
    <property type="entry name" value="RecA-like_Lon"/>
    <property type="match status" value="1"/>
</dbReference>
<dbReference type="FunFam" id="3.30.230.10:FF:000010">
    <property type="entry name" value="Lon protease"/>
    <property type="match status" value="1"/>
</dbReference>
<dbReference type="FunFam" id="1.20.5.5270:FF:000002">
    <property type="entry name" value="Lon protease homolog"/>
    <property type="match status" value="1"/>
</dbReference>
<dbReference type="FunFam" id="3.40.50.300:FF:000021">
    <property type="entry name" value="Lon protease homolog"/>
    <property type="match status" value="1"/>
</dbReference>
<dbReference type="Gene3D" id="1.10.8.60">
    <property type="match status" value="1"/>
</dbReference>
<dbReference type="Gene3D" id="1.20.5.5270">
    <property type="match status" value="1"/>
</dbReference>
<dbReference type="Gene3D" id="1.20.58.1480">
    <property type="match status" value="1"/>
</dbReference>
<dbReference type="Gene3D" id="3.30.230.10">
    <property type="match status" value="1"/>
</dbReference>
<dbReference type="Gene3D" id="2.30.130.40">
    <property type="entry name" value="LON domain-like"/>
    <property type="match status" value="1"/>
</dbReference>
<dbReference type="Gene3D" id="3.40.50.300">
    <property type="entry name" value="P-loop containing nucleotide triphosphate hydrolases"/>
    <property type="match status" value="1"/>
</dbReference>
<dbReference type="HAMAP" id="MF_01973">
    <property type="entry name" value="lon_bact"/>
    <property type="match status" value="1"/>
</dbReference>
<dbReference type="InterPro" id="IPR003593">
    <property type="entry name" value="AAA+_ATPase"/>
</dbReference>
<dbReference type="InterPro" id="IPR003959">
    <property type="entry name" value="ATPase_AAA_core"/>
</dbReference>
<dbReference type="InterPro" id="IPR027543">
    <property type="entry name" value="Lon_bac"/>
</dbReference>
<dbReference type="InterPro" id="IPR004815">
    <property type="entry name" value="Lon_bac/euk-typ"/>
</dbReference>
<dbReference type="InterPro" id="IPR054594">
    <property type="entry name" value="Lon_lid"/>
</dbReference>
<dbReference type="InterPro" id="IPR008269">
    <property type="entry name" value="Lon_proteolytic"/>
</dbReference>
<dbReference type="InterPro" id="IPR027065">
    <property type="entry name" value="Lon_Prtase"/>
</dbReference>
<dbReference type="InterPro" id="IPR003111">
    <property type="entry name" value="Lon_prtase_N"/>
</dbReference>
<dbReference type="InterPro" id="IPR046336">
    <property type="entry name" value="Lon_prtase_N_sf"/>
</dbReference>
<dbReference type="InterPro" id="IPR027417">
    <property type="entry name" value="P-loop_NTPase"/>
</dbReference>
<dbReference type="InterPro" id="IPR008268">
    <property type="entry name" value="Peptidase_S16_AS"/>
</dbReference>
<dbReference type="InterPro" id="IPR015947">
    <property type="entry name" value="PUA-like_sf"/>
</dbReference>
<dbReference type="InterPro" id="IPR020568">
    <property type="entry name" value="Ribosomal_Su5_D2-typ_SF"/>
</dbReference>
<dbReference type="InterPro" id="IPR014721">
    <property type="entry name" value="Ribsml_uS5_D2-typ_fold_subgr"/>
</dbReference>
<dbReference type="NCBIfam" id="TIGR00763">
    <property type="entry name" value="lon"/>
    <property type="match status" value="1"/>
</dbReference>
<dbReference type="NCBIfam" id="NF008053">
    <property type="entry name" value="PRK10787.1"/>
    <property type="match status" value="1"/>
</dbReference>
<dbReference type="PANTHER" id="PTHR10046">
    <property type="entry name" value="ATP DEPENDENT LON PROTEASE FAMILY MEMBER"/>
    <property type="match status" value="1"/>
</dbReference>
<dbReference type="Pfam" id="PF00004">
    <property type="entry name" value="AAA"/>
    <property type="match status" value="1"/>
</dbReference>
<dbReference type="Pfam" id="PF05362">
    <property type="entry name" value="Lon_C"/>
    <property type="match status" value="1"/>
</dbReference>
<dbReference type="Pfam" id="PF22667">
    <property type="entry name" value="Lon_lid"/>
    <property type="match status" value="1"/>
</dbReference>
<dbReference type="Pfam" id="PF02190">
    <property type="entry name" value="LON_substr_bdg"/>
    <property type="match status" value="1"/>
</dbReference>
<dbReference type="PIRSF" id="PIRSF001174">
    <property type="entry name" value="Lon_proteas"/>
    <property type="match status" value="1"/>
</dbReference>
<dbReference type="PRINTS" id="PR00830">
    <property type="entry name" value="ENDOLAPTASE"/>
</dbReference>
<dbReference type="SMART" id="SM00382">
    <property type="entry name" value="AAA"/>
    <property type="match status" value="1"/>
</dbReference>
<dbReference type="SMART" id="SM00464">
    <property type="entry name" value="LON"/>
    <property type="match status" value="1"/>
</dbReference>
<dbReference type="SUPFAM" id="SSF52540">
    <property type="entry name" value="P-loop containing nucleoside triphosphate hydrolases"/>
    <property type="match status" value="1"/>
</dbReference>
<dbReference type="SUPFAM" id="SSF88697">
    <property type="entry name" value="PUA domain-like"/>
    <property type="match status" value="1"/>
</dbReference>
<dbReference type="SUPFAM" id="SSF54211">
    <property type="entry name" value="Ribosomal protein S5 domain 2-like"/>
    <property type="match status" value="1"/>
</dbReference>
<dbReference type="PROSITE" id="PS51787">
    <property type="entry name" value="LON_N"/>
    <property type="match status" value="1"/>
</dbReference>
<dbReference type="PROSITE" id="PS51786">
    <property type="entry name" value="LON_PROTEOLYTIC"/>
    <property type="match status" value="1"/>
</dbReference>
<dbReference type="PROSITE" id="PS01046">
    <property type="entry name" value="LON_SER"/>
    <property type="match status" value="1"/>
</dbReference>
<organism>
    <name type="scientific">Brucella abortus biovar 1 (strain 9-941)</name>
    <dbReference type="NCBI Taxonomy" id="262698"/>
    <lineage>
        <taxon>Bacteria</taxon>
        <taxon>Pseudomonadati</taxon>
        <taxon>Pseudomonadota</taxon>
        <taxon>Alphaproteobacteria</taxon>
        <taxon>Hyphomicrobiales</taxon>
        <taxon>Brucellaceae</taxon>
        <taxon>Brucella/Ochrobactrum group</taxon>
        <taxon>Brucella</taxon>
    </lineage>
</organism>
<accession>P0C113</accession>
<accession>O52605</accession>
<accession>Q57D31</accession>
<feature type="chain" id="PRO_0000076121" description="Lon protease">
    <location>
        <begin position="1"/>
        <end position="812"/>
    </location>
</feature>
<feature type="domain" description="Lon N-terminal" evidence="3">
    <location>
        <begin position="22"/>
        <end position="215"/>
    </location>
</feature>
<feature type="domain" description="Lon proteolytic" evidence="2">
    <location>
        <begin position="602"/>
        <end position="783"/>
    </location>
</feature>
<feature type="region of interest" description="Disordered" evidence="4">
    <location>
        <begin position="787"/>
        <end position="812"/>
    </location>
</feature>
<feature type="active site" evidence="1">
    <location>
        <position position="689"/>
    </location>
</feature>
<feature type="active site" evidence="1">
    <location>
        <position position="732"/>
    </location>
</feature>
<feature type="binding site" evidence="1">
    <location>
        <begin position="367"/>
        <end position="374"/>
    </location>
    <ligand>
        <name>ATP</name>
        <dbReference type="ChEBI" id="CHEBI:30616"/>
    </ligand>
</feature>
<reference key="1">
    <citation type="journal article" date="2005" name="J. Bacteriol.">
        <title>Completion of the genome sequence of Brucella abortus and comparison to the highly similar genomes of Brucella melitensis and Brucella suis.</title>
        <authorList>
            <person name="Halling S.M."/>
            <person name="Peterson-Burch B.D."/>
            <person name="Bricker B.J."/>
            <person name="Zuerner R.L."/>
            <person name="Qing Z."/>
            <person name="Li L.-L."/>
            <person name="Kapur V."/>
            <person name="Alt D.P."/>
            <person name="Olsen S.C."/>
        </authorList>
    </citation>
    <scope>NUCLEOTIDE SEQUENCE [LARGE SCALE GENOMIC DNA]</scope>
    <source>
        <strain>9-941</strain>
    </source>
</reference>
<name>LON_BRUAB</name>
<keyword id="KW-0067">ATP-binding</keyword>
<keyword id="KW-0963">Cytoplasm</keyword>
<keyword id="KW-0378">Hydrolase</keyword>
<keyword id="KW-0547">Nucleotide-binding</keyword>
<keyword id="KW-0645">Protease</keyword>
<keyword id="KW-0720">Serine protease</keyword>
<keyword id="KW-0346">Stress response</keyword>
<sequence>MTGIEQKTPVGGSETGGADGLYAVLPLRDIVVFPHMIVPLFVGREKSIRALEEVMGVDKQILLATQKNAADDDPAPDAIYEIGTIANVLQLLKLPDGTVKVLVEGTARAKISKFTDREDYHEAYAAALQEPEEDAVEIEALARSVVPDFENYVKLNKKISPEVVGAASQIDDYSKLADTVASHLAIKIPEKQEMLSVLSVRERLEKALSFMEAEISVLQVEKRIRSRVKRQMEKTQREYYLNEQMKAIQKELGDSEDGRDEVAEIEERITKTKLSKEAREKALAELKKLRSMSPMSAEATVVRNYLDWLLSIPWGKKSKVKQDLNFAQEVLDAEHFGLGKVKERIVEYLAVQARSTKIKGPILCLVGPPGVGKTSLARSIAKATGREYVRMSLGGVRDEAEIRGHRRTYIGSMPGKVIQSMKKAKKSNPLFLLDEIDKMGQDFRGDPSSAMLEVLDPEQNATFMDHYLEVEYDLSNVMFVTTANTMNIPVPLLDRMEIIRIAGYTEDEKLEIAKRHLLPKAIKDHALQPKEFSVTEDALRNVIRHYTREAGVRSLEREVMTLARKAVTEILKTKKKSVKITDKNLSDYLGVEKFRFGQIDGEDQVGVVTGLAWTEVGGELLTIEGVMMPGKGRMTVTGNLRDVMKESISAAASYVRSRAIDFGIEPPLFDKRDIHVHVPEGATPKDGPSAGIAMVTAIVSVLTGIPVRKDIAMTGEVTLRGRVLPIGGLKEKLLATLRGGIKKVLIPEENAKDLAEIPDNVKNNLEIVPVSRVGEVLKHALVRQPEPIEWTEQENPTAVPPVEDEAGASLAH</sequence>